<proteinExistence type="inferred from homology"/>
<feature type="chain" id="PRO_1000078114" description="Shikimate dehydrogenase (NADP(+))">
    <location>
        <begin position="1"/>
        <end position="289"/>
    </location>
</feature>
<feature type="active site" description="Proton acceptor" evidence="1">
    <location>
        <position position="73"/>
    </location>
</feature>
<feature type="binding site" evidence="1">
    <location>
        <begin position="22"/>
        <end position="24"/>
    </location>
    <ligand>
        <name>shikimate</name>
        <dbReference type="ChEBI" id="CHEBI:36208"/>
    </ligand>
</feature>
<feature type="binding site" evidence="1">
    <location>
        <position position="69"/>
    </location>
    <ligand>
        <name>shikimate</name>
        <dbReference type="ChEBI" id="CHEBI:36208"/>
    </ligand>
</feature>
<feature type="binding site" evidence="1">
    <location>
        <position position="85"/>
    </location>
    <ligand>
        <name>NADP(+)</name>
        <dbReference type="ChEBI" id="CHEBI:58349"/>
    </ligand>
</feature>
<feature type="binding site" evidence="1">
    <location>
        <position position="94"/>
    </location>
    <ligand>
        <name>shikimate</name>
        <dbReference type="ChEBI" id="CHEBI:36208"/>
    </ligand>
</feature>
<feature type="binding site" evidence="1">
    <location>
        <position position="109"/>
    </location>
    <ligand>
        <name>shikimate</name>
        <dbReference type="ChEBI" id="CHEBI:36208"/>
    </ligand>
</feature>
<feature type="binding site" evidence="1">
    <location>
        <begin position="134"/>
        <end position="138"/>
    </location>
    <ligand>
        <name>NADP(+)</name>
        <dbReference type="ChEBI" id="CHEBI:58349"/>
    </ligand>
</feature>
<feature type="binding site" evidence="1">
    <location>
        <begin position="158"/>
        <end position="163"/>
    </location>
    <ligand>
        <name>NADP(+)</name>
        <dbReference type="ChEBI" id="CHEBI:58349"/>
    </ligand>
</feature>
<feature type="binding site" evidence="1">
    <location>
        <position position="226"/>
    </location>
    <ligand>
        <name>NADP(+)</name>
        <dbReference type="ChEBI" id="CHEBI:58349"/>
    </ligand>
</feature>
<feature type="binding site" evidence="1">
    <location>
        <position position="228"/>
    </location>
    <ligand>
        <name>shikimate</name>
        <dbReference type="ChEBI" id="CHEBI:36208"/>
    </ligand>
</feature>
<feature type="binding site" evidence="1">
    <location>
        <position position="249"/>
    </location>
    <ligand>
        <name>NADP(+)</name>
        <dbReference type="ChEBI" id="CHEBI:58349"/>
    </ligand>
</feature>
<organism>
    <name type="scientific">Brucella canis (strain ATCC 23365 / NCTC 10854 / RM-666)</name>
    <dbReference type="NCBI Taxonomy" id="483179"/>
    <lineage>
        <taxon>Bacteria</taxon>
        <taxon>Pseudomonadati</taxon>
        <taxon>Pseudomonadota</taxon>
        <taxon>Alphaproteobacteria</taxon>
        <taxon>Hyphomicrobiales</taxon>
        <taxon>Brucellaceae</taxon>
        <taxon>Brucella/Ochrobactrum group</taxon>
        <taxon>Brucella</taxon>
    </lineage>
</organism>
<protein>
    <recommendedName>
        <fullName evidence="1">Shikimate dehydrogenase (NADP(+))</fullName>
        <shortName evidence="1">SDH</shortName>
        <ecNumber evidence="1">1.1.1.25</ecNumber>
    </recommendedName>
</protein>
<sequence>MDDKSMARGRKAFVTGFPIKHSRSPLIHGFWLKELGIDGSYEAVEVKPEDFSSFAASLAANGFAGGNVTIPHKEAAYAAAESLDEAACAIGAVNTLWLENGRLCGGNTDAYGFAANLDASAPGWDKADRALVLGAGGASRAVVHALLSRGVCHVSVVNRTLSRAEELAAHFGARVYAHGWDEAQALVSNAGLIVNTTALGMSGHGEGQDFPIDLTCAPKEAVATDIVYVPLRTAFLNKAEKAGLKTVDGLGMLLHQAVPGFERWFGQRPQVTQALREHILADMAKAGAL</sequence>
<dbReference type="EC" id="1.1.1.25" evidence="1"/>
<dbReference type="EMBL" id="CP000872">
    <property type="protein sequence ID" value="ABX63099.1"/>
    <property type="molecule type" value="Genomic_DNA"/>
</dbReference>
<dbReference type="RefSeq" id="WP_004691152.1">
    <property type="nucleotide sequence ID" value="NC_010103.1"/>
</dbReference>
<dbReference type="SMR" id="A9M9Q4"/>
<dbReference type="GeneID" id="55591639"/>
<dbReference type="KEGG" id="bcs:BCAN_A2115"/>
<dbReference type="HOGENOM" id="CLU_044063_2_0_5"/>
<dbReference type="PhylomeDB" id="A9M9Q4"/>
<dbReference type="UniPathway" id="UPA00053">
    <property type="reaction ID" value="UER00087"/>
</dbReference>
<dbReference type="Proteomes" id="UP000001385">
    <property type="component" value="Chromosome I"/>
</dbReference>
<dbReference type="GO" id="GO:0005829">
    <property type="term" value="C:cytosol"/>
    <property type="evidence" value="ECO:0007669"/>
    <property type="project" value="TreeGrafter"/>
</dbReference>
<dbReference type="GO" id="GO:0050661">
    <property type="term" value="F:NADP binding"/>
    <property type="evidence" value="ECO:0007669"/>
    <property type="project" value="InterPro"/>
</dbReference>
<dbReference type="GO" id="GO:0004764">
    <property type="term" value="F:shikimate 3-dehydrogenase (NADP+) activity"/>
    <property type="evidence" value="ECO:0007669"/>
    <property type="project" value="UniProtKB-UniRule"/>
</dbReference>
<dbReference type="GO" id="GO:0008652">
    <property type="term" value="P:amino acid biosynthetic process"/>
    <property type="evidence" value="ECO:0007669"/>
    <property type="project" value="UniProtKB-KW"/>
</dbReference>
<dbReference type="GO" id="GO:0009073">
    <property type="term" value="P:aromatic amino acid family biosynthetic process"/>
    <property type="evidence" value="ECO:0007669"/>
    <property type="project" value="UniProtKB-KW"/>
</dbReference>
<dbReference type="GO" id="GO:0009423">
    <property type="term" value="P:chorismate biosynthetic process"/>
    <property type="evidence" value="ECO:0007669"/>
    <property type="project" value="UniProtKB-UniRule"/>
</dbReference>
<dbReference type="GO" id="GO:0019632">
    <property type="term" value="P:shikimate metabolic process"/>
    <property type="evidence" value="ECO:0007669"/>
    <property type="project" value="InterPro"/>
</dbReference>
<dbReference type="CDD" id="cd01065">
    <property type="entry name" value="NAD_bind_Shikimate_DH"/>
    <property type="match status" value="1"/>
</dbReference>
<dbReference type="Gene3D" id="3.40.50.10860">
    <property type="entry name" value="Leucine Dehydrogenase, chain A, domain 1"/>
    <property type="match status" value="1"/>
</dbReference>
<dbReference type="Gene3D" id="3.40.50.720">
    <property type="entry name" value="NAD(P)-binding Rossmann-like Domain"/>
    <property type="match status" value="1"/>
</dbReference>
<dbReference type="HAMAP" id="MF_00222">
    <property type="entry name" value="Shikimate_DH_AroE"/>
    <property type="match status" value="1"/>
</dbReference>
<dbReference type="InterPro" id="IPR046346">
    <property type="entry name" value="Aminoacid_DH-like_N_sf"/>
</dbReference>
<dbReference type="InterPro" id="IPR036291">
    <property type="entry name" value="NAD(P)-bd_dom_sf"/>
</dbReference>
<dbReference type="InterPro" id="IPR041121">
    <property type="entry name" value="SDH_C"/>
</dbReference>
<dbReference type="InterPro" id="IPR011342">
    <property type="entry name" value="Shikimate_DH"/>
</dbReference>
<dbReference type="InterPro" id="IPR013708">
    <property type="entry name" value="Shikimate_DH-bd_N"/>
</dbReference>
<dbReference type="InterPro" id="IPR022893">
    <property type="entry name" value="Shikimate_DH_fam"/>
</dbReference>
<dbReference type="InterPro" id="IPR006151">
    <property type="entry name" value="Shikm_DH/Glu-tRNA_Rdtase"/>
</dbReference>
<dbReference type="NCBIfam" id="TIGR00507">
    <property type="entry name" value="aroE"/>
    <property type="match status" value="1"/>
</dbReference>
<dbReference type="NCBIfam" id="NF001312">
    <property type="entry name" value="PRK00258.1-4"/>
    <property type="match status" value="1"/>
</dbReference>
<dbReference type="PANTHER" id="PTHR21089:SF1">
    <property type="entry name" value="BIFUNCTIONAL 3-DEHYDROQUINATE DEHYDRATASE_SHIKIMATE DEHYDROGENASE, CHLOROPLASTIC"/>
    <property type="match status" value="1"/>
</dbReference>
<dbReference type="PANTHER" id="PTHR21089">
    <property type="entry name" value="SHIKIMATE DEHYDROGENASE"/>
    <property type="match status" value="1"/>
</dbReference>
<dbReference type="Pfam" id="PF18317">
    <property type="entry name" value="SDH_C"/>
    <property type="match status" value="1"/>
</dbReference>
<dbReference type="Pfam" id="PF01488">
    <property type="entry name" value="Shikimate_DH"/>
    <property type="match status" value="1"/>
</dbReference>
<dbReference type="Pfam" id="PF08501">
    <property type="entry name" value="Shikimate_dh_N"/>
    <property type="match status" value="1"/>
</dbReference>
<dbReference type="SUPFAM" id="SSF53223">
    <property type="entry name" value="Aminoacid dehydrogenase-like, N-terminal domain"/>
    <property type="match status" value="1"/>
</dbReference>
<dbReference type="SUPFAM" id="SSF51735">
    <property type="entry name" value="NAD(P)-binding Rossmann-fold domains"/>
    <property type="match status" value="1"/>
</dbReference>
<gene>
    <name evidence="1" type="primary">aroE</name>
    <name type="ordered locus">BCAN_A2115</name>
</gene>
<reference key="1">
    <citation type="submission" date="2007-10" db="EMBL/GenBank/DDBJ databases">
        <title>Brucella canis ATCC 23365 whole genome shotgun sequencing project.</title>
        <authorList>
            <person name="Setubal J.C."/>
            <person name="Bowns C."/>
            <person name="Boyle S."/>
            <person name="Crasta O.R."/>
            <person name="Czar M.J."/>
            <person name="Dharmanolla C."/>
            <person name="Gillespie J.J."/>
            <person name="Kenyon R.W."/>
            <person name="Lu J."/>
            <person name="Mane S."/>
            <person name="Mohapatra S."/>
            <person name="Nagrani S."/>
            <person name="Purkayastha A."/>
            <person name="Rajasimha H.K."/>
            <person name="Shallom J.M."/>
            <person name="Shallom S."/>
            <person name="Shukla M."/>
            <person name="Snyder E.E."/>
            <person name="Sobral B.W."/>
            <person name="Wattam A.R."/>
            <person name="Will R."/>
            <person name="Williams K."/>
            <person name="Yoo H."/>
            <person name="Bruce D."/>
            <person name="Detter C."/>
            <person name="Munk C."/>
            <person name="Brettin T.S."/>
        </authorList>
    </citation>
    <scope>NUCLEOTIDE SEQUENCE [LARGE SCALE GENOMIC DNA]</scope>
    <source>
        <strain>ATCC 23365 / NCTC 10854 / RM-666</strain>
    </source>
</reference>
<name>AROE_BRUC2</name>
<accession>A9M9Q4</accession>
<evidence type="ECO:0000255" key="1">
    <source>
        <dbReference type="HAMAP-Rule" id="MF_00222"/>
    </source>
</evidence>
<keyword id="KW-0028">Amino-acid biosynthesis</keyword>
<keyword id="KW-0057">Aromatic amino acid biosynthesis</keyword>
<keyword id="KW-0521">NADP</keyword>
<keyword id="KW-0560">Oxidoreductase</keyword>
<keyword id="KW-1185">Reference proteome</keyword>
<comment type="function">
    <text evidence="1">Involved in the biosynthesis of the chorismate, which leads to the biosynthesis of aromatic amino acids. Catalyzes the reversible NADPH linked reduction of 3-dehydroshikimate (DHSA) to yield shikimate (SA).</text>
</comment>
<comment type="catalytic activity">
    <reaction evidence="1">
        <text>shikimate + NADP(+) = 3-dehydroshikimate + NADPH + H(+)</text>
        <dbReference type="Rhea" id="RHEA:17737"/>
        <dbReference type="ChEBI" id="CHEBI:15378"/>
        <dbReference type="ChEBI" id="CHEBI:16630"/>
        <dbReference type="ChEBI" id="CHEBI:36208"/>
        <dbReference type="ChEBI" id="CHEBI:57783"/>
        <dbReference type="ChEBI" id="CHEBI:58349"/>
        <dbReference type="EC" id="1.1.1.25"/>
    </reaction>
</comment>
<comment type="pathway">
    <text evidence="1">Metabolic intermediate biosynthesis; chorismate biosynthesis; chorismate from D-erythrose 4-phosphate and phosphoenolpyruvate: step 4/7.</text>
</comment>
<comment type="subunit">
    <text evidence="1">Homodimer.</text>
</comment>
<comment type="similarity">
    <text evidence="1">Belongs to the shikimate dehydrogenase family.</text>
</comment>